<keyword id="KW-0256">Endoplasmic reticulum</keyword>
<keyword id="KW-0275">Fatty acid biosynthesis</keyword>
<keyword id="KW-0276">Fatty acid metabolism</keyword>
<keyword id="KW-0444">Lipid biosynthesis</keyword>
<keyword id="KW-0443">Lipid metabolism</keyword>
<keyword id="KW-0472">Membrane</keyword>
<keyword id="KW-0560">Oxidoreductase</keyword>
<keyword id="KW-1185">Reference proteome</keyword>
<keyword id="KW-0812">Transmembrane</keyword>
<keyword id="KW-1133">Transmembrane helix</keyword>
<accession>P48631</accession>
<comment type="function">
    <text>ER (microsomal) omega-6 fatty acid desaturase introduces the second double bond in the biosynthesis of 18:3 fatty acids, important constituents of plant membranes. It is thought to use cytochrome b5 as an electron donor and to act on fatty acids esterified to phosphatidylcholine and, possibly, other phospholipids.</text>
</comment>
<comment type="pathway">
    <text>Lipid metabolism; polyunsaturated fatty acid biosynthesis.</text>
</comment>
<comment type="subcellular location">
    <subcellularLocation>
        <location>Endoplasmic reticulum membrane</location>
        <topology>Multi-pass membrane protein</topology>
    </subcellularLocation>
</comment>
<comment type="domain">
    <text>The histidine box domains may contain the active site and/or be involved in metal ion binding.</text>
</comment>
<comment type="similarity">
    <text evidence="2">Belongs to the fatty acid desaturase type 1 family.</text>
</comment>
<evidence type="ECO:0000255" key="1"/>
<evidence type="ECO:0000305" key="2"/>
<dbReference type="EC" id="1.14.19.-"/>
<dbReference type="EMBL" id="L43921">
    <property type="protein sequence ID" value="AAB00860.1"/>
    <property type="molecule type" value="mRNA"/>
</dbReference>
<dbReference type="PIR" id="T07688">
    <property type="entry name" value="T07688"/>
</dbReference>
<dbReference type="RefSeq" id="NP_001238358.1">
    <property type="nucleotide sequence ID" value="NM_001251429.1"/>
</dbReference>
<dbReference type="SMR" id="P48631"/>
<dbReference type="FunCoup" id="P48631">
    <property type="interactions" value="363"/>
</dbReference>
<dbReference type="STRING" id="3847.P48631"/>
<dbReference type="PaxDb" id="3847-GLYMA03G30070.3"/>
<dbReference type="GeneID" id="547815"/>
<dbReference type="KEGG" id="gmx:547815"/>
<dbReference type="eggNOG" id="ENOG502QQNB">
    <property type="taxonomic scope" value="Eukaryota"/>
</dbReference>
<dbReference type="HOGENOM" id="CLU_033094_0_1_1"/>
<dbReference type="InParanoid" id="P48631"/>
<dbReference type="OrthoDB" id="1461976at2759"/>
<dbReference type="BRENDA" id="1.14.19.6">
    <property type="organism ID" value="2483"/>
</dbReference>
<dbReference type="UniPathway" id="UPA00658"/>
<dbReference type="Proteomes" id="UP000008827">
    <property type="component" value="Unplaced"/>
</dbReference>
<dbReference type="GO" id="GO:0005789">
    <property type="term" value="C:endoplasmic reticulum membrane"/>
    <property type="evidence" value="ECO:0007669"/>
    <property type="project" value="UniProtKB-SubCell"/>
</dbReference>
<dbReference type="GO" id="GO:0045485">
    <property type="term" value="F:omega-6 fatty acid desaturase activity"/>
    <property type="evidence" value="ECO:0000318"/>
    <property type="project" value="GO_Central"/>
</dbReference>
<dbReference type="GO" id="GO:0016717">
    <property type="term" value="F:oxidoreductase activity, acting on paired donors, with oxidation of a pair of donors resulting in the reduction of molecular oxygen to two molecules of water"/>
    <property type="evidence" value="ECO:0007669"/>
    <property type="project" value="InterPro"/>
</dbReference>
<dbReference type="GO" id="GO:0006636">
    <property type="term" value="P:unsaturated fatty acid biosynthetic process"/>
    <property type="evidence" value="ECO:0007669"/>
    <property type="project" value="UniProtKB-UniPathway"/>
</dbReference>
<dbReference type="CDD" id="cd03507">
    <property type="entry name" value="Delta12-FADS-like"/>
    <property type="match status" value="1"/>
</dbReference>
<dbReference type="InterPro" id="IPR005804">
    <property type="entry name" value="FA_desaturase_dom"/>
</dbReference>
<dbReference type="InterPro" id="IPR021863">
    <property type="entry name" value="FAS_N"/>
</dbReference>
<dbReference type="InterPro" id="IPR012171">
    <property type="entry name" value="Fatty_acid_desaturase"/>
</dbReference>
<dbReference type="PANTHER" id="PTHR32100">
    <property type="entry name" value="OMEGA-6 FATTY ACID DESATURASE, CHLOROPLASTIC"/>
    <property type="match status" value="1"/>
</dbReference>
<dbReference type="Pfam" id="PF11960">
    <property type="entry name" value="DUF3474"/>
    <property type="match status" value="1"/>
</dbReference>
<dbReference type="Pfam" id="PF00487">
    <property type="entry name" value="FA_desaturase"/>
    <property type="match status" value="1"/>
</dbReference>
<organism>
    <name type="scientific">Glycine max</name>
    <name type="common">Soybean</name>
    <name type="synonym">Glycine hispida</name>
    <dbReference type="NCBI Taxonomy" id="3847"/>
    <lineage>
        <taxon>Eukaryota</taxon>
        <taxon>Viridiplantae</taxon>
        <taxon>Streptophyta</taxon>
        <taxon>Embryophyta</taxon>
        <taxon>Tracheophyta</taxon>
        <taxon>Spermatophyta</taxon>
        <taxon>Magnoliopsida</taxon>
        <taxon>eudicotyledons</taxon>
        <taxon>Gunneridae</taxon>
        <taxon>Pentapetalae</taxon>
        <taxon>rosids</taxon>
        <taxon>fabids</taxon>
        <taxon>Fabales</taxon>
        <taxon>Fabaceae</taxon>
        <taxon>Papilionoideae</taxon>
        <taxon>50 kb inversion clade</taxon>
        <taxon>NPAAA clade</taxon>
        <taxon>indigoferoid/millettioid clade</taxon>
        <taxon>Phaseoleae</taxon>
        <taxon>Glycine</taxon>
        <taxon>Glycine subgen. Soja</taxon>
    </lineage>
</organism>
<gene>
    <name type="primary">FAD2-2</name>
</gene>
<sequence>MGAGGRTDVPPANRKSEVDPLKRVPFEKPQFSLSQIKKAIPPHCFQRSVLRSFSYVVYDLTIAFCLYYVATHYFHLLPGPLSFRGMAIYWAVQGCILTGVWVIAHECGHHAFSDYQLLDDIVGLILHSALLVPYFSWKYSHRRHHSNTGSLERDEVFVPKQKSCIKWYSKYLNNPPGRVLTLAVTLTLGWPLYLALNVSGRPYDRFACHYDPYGPIYSDRERLQIYISDAGVLAVVYGLFRLAMAKGLAWVVCVYGVPLLVVNGFLVLITFLQHTHPALPHYTSSEWDWLRGALATVDRDYGILNKVFHNITDTHVAHHLFSTMPHYHAMEATKAIKPILGEYYRFDETPFVKAMWREARECIYVEPDQSTESKGVFWYNNKL</sequence>
<protein>
    <recommendedName>
        <fullName>Omega-6 fatty acid desaturase, endoplasmic reticulum isozyme 2</fullName>
        <ecNumber>1.14.19.-</ecNumber>
    </recommendedName>
</protein>
<feature type="chain" id="PRO_0000185421" description="Omega-6 fatty acid desaturase, endoplasmic reticulum isozyme 2">
    <location>
        <begin position="1"/>
        <end position="383"/>
    </location>
</feature>
<feature type="transmembrane region" description="Helical" evidence="1">
    <location>
        <begin position="61"/>
        <end position="81"/>
    </location>
</feature>
<feature type="transmembrane region" description="Helical" evidence="1">
    <location>
        <begin position="85"/>
        <end position="105"/>
    </location>
</feature>
<feature type="transmembrane region" description="Helical" evidence="1">
    <location>
        <begin position="117"/>
        <end position="137"/>
    </location>
</feature>
<feature type="transmembrane region" description="Helical" evidence="1">
    <location>
        <begin position="179"/>
        <end position="199"/>
    </location>
</feature>
<feature type="transmembrane region" description="Helical" evidence="1">
    <location>
        <begin position="225"/>
        <end position="245"/>
    </location>
</feature>
<feature type="transmembrane region" description="Helical" evidence="1">
    <location>
        <begin position="249"/>
        <end position="269"/>
    </location>
</feature>
<feature type="short sequence motif" description="Histidine box-1">
    <location>
        <begin position="105"/>
        <end position="109"/>
    </location>
</feature>
<feature type="short sequence motif" description="Histidine box-2">
    <location>
        <begin position="141"/>
        <end position="145"/>
    </location>
</feature>
<feature type="short sequence motif" description="Histidine box-3">
    <location>
        <begin position="315"/>
        <end position="319"/>
    </location>
</feature>
<proteinExistence type="evidence at transcript level"/>
<reference key="1">
    <citation type="journal article" date="1996" name="Plant Physiol.">
        <title>Developmental and growth temperature regulation of two different microsomal omega-6 desaturase genes in soybeans.</title>
        <authorList>
            <person name="Heppard E.P."/>
            <person name="Kinney A.J."/>
            <person name="Stecca K.L."/>
            <person name="Miao G.H."/>
        </authorList>
    </citation>
    <scope>NUCLEOTIDE SEQUENCE [MRNA]</scope>
    <source>
        <tissue>Epicotyl</tissue>
    </source>
</reference>
<name>FD6E2_SOYBN</name>